<keyword id="KW-0002">3D-structure</keyword>
<keyword id="KW-0106">Calcium</keyword>
<keyword id="KW-0903">Direct protein sequencing</keyword>
<keyword id="KW-1015">Disulfide bond</keyword>
<keyword id="KW-0325">Glycoprotein</keyword>
<keyword id="KW-0333">Golgi apparatus</keyword>
<keyword id="KW-0430">Lectin</keyword>
<keyword id="KW-0472">Membrane</keyword>
<keyword id="KW-0479">Metal-binding</keyword>
<keyword id="KW-0653">Protein transport</keyword>
<keyword id="KW-1185">Reference proteome</keyword>
<keyword id="KW-0732">Signal</keyword>
<keyword id="KW-0812">Transmembrane</keyword>
<keyword id="KW-1133">Transmembrane helix</keyword>
<keyword id="KW-0813">Transport</keyword>
<proteinExistence type="evidence at protein level"/>
<sequence>MAAEGWIWRWGWGRRCLGRPGLPGPGPGPATPLFLLLLLGPVVADITDGNSEHLKREHSLIKPYQGVGSSSMPLWDFQGSTILTSQYVRLTPDERSKEGSIWNHQPCFLKDWEMHVHFKVHGTGKKNLHGDGIALWYTRDRLVPGPVFGSKDNFHGLAIFLDTYPNDETTERVFPYISVMVNNGSLSYDHSKDGRWTELAGCTADFRNRDHDTFLAVRYSRGRLTVMTDLEDKNEWKNCIDITGVRLPTGYYFGASAGTGDLSDNHDIISMKLFQLMVEHTPDEENIDWTKIEPSVNFLKSPKDNVDDPTGNFRSGPLTGWRVFLLLLCALLGIIVCAVVGAVVFQKRQERNKRFY</sequence>
<organism>
    <name type="scientific">Canis lupus familiaris</name>
    <name type="common">Dog</name>
    <name type="synonym">Canis familiaris</name>
    <dbReference type="NCBI Taxonomy" id="9615"/>
    <lineage>
        <taxon>Eukaryota</taxon>
        <taxon>Metazoa</taxon>
        <taxon>Chordata</taxon>
        <taxon>Craniata</taxon>
        <taxon>Vertebrata</taxon>
        <taxon>Euteleostomi</taxon>
        <taxon>Mammalia</taxon>
        <taxon>Eutheria</taxon>
        <taxon>Laurasiatheria</taxon>
        <taxon>Carnivora</taxon>
        <taxon>Caniformia</taxon>
        <taxon>Canidae</taxon>
        <taxon>Canis</taxon>
    </lineage>
</organism>
<name>LMAN2_CANLF</name>
<protein>
    <recommendedName>
        <fullName>Vesicular integral-membrane protein VIP36</fullName>
    </recommendedName>
    <alternativeName>
        <fullName>Lectin mannose-binding 2</fullName>
    </alternativeName>
    <alternativeName>
        <fullName>Vesicular integral-membrane protein 36</fullName>
        <shortName>VIP36</shortName>
    </alternativeName>
</protein>
<dbReference type="EMBL" id="X76392">
    <property type="protein sequence ID" value="CAA53977.1"/>
    <property type="molecule type" value="mRNA"/>
</dbReference>
<dbReference type="RefSeq" id="NP_001003258.1">
    <property type="nucleotide sequence ID" value="NM_001003258.2"/>
</dbReference>
<dbReference type="PDB" id="2DUO">
    <property type="method" value="X-ray"/>
    <property type="resolution" value="1.80 A"/>
    <property type="chains" value="A/B=51-301"/>
</dbReference>
<dbReference type="PDB" id="2DUP">
    <property type="method" value="X-ray"/>
    <property type="resolution" value="2.10 A"/>
    <property type="chains" value="A/B=51-301"/>
</dbReference>
<dbReference type="PDB" id="2DUQ">
    <property type="method" value="X-ray"/>
    <property type="resolution" value="1.80 A"/>
    <property type="chains" value="A/B=51-301"/>
</dbReference>
<dbReference type="PDB" id="2DUR">
    <property type="method" value="X-ray"/>
    <property type="resolution" value="1.65 A"/>
    <property type="chains" value="A/B=51-301"/>
</dbReference>
<dbReference type="PDB" id="2E6V">
    <property type="method" value="X-ray"/>
    <property type="resolution" value="2.50 A"/>
    <property type="chains" value="A/B/C/D/E=51-301"/>
</dbReference>
<dbReference type="PDBsum" id="2DUO"/>
<dbReference type="PDBsum" id="2DUP"/>
<dbReference type="PDBsum" id="2DUQ"/>
<dbReference type="PDBsum" id="2DUR"/>
<dbReference type="PDBsum" id="2E6V"/>
<dbReference type="SMR" id="P49256"/>
<dbReference type="FunCoup" id="P49256">
    <property type="interactions" value="2311"/>
</dbReference>
<dbReference type="STRING" id="9615.ENSCAFP00000024181"/>
<dbReference type="UniLectin" id="P49256"/>
<dbReference type="GlyCosmos" id="P49256">
    <property type="glycosylation" value="1 site, No reported glycans"/>
</dbReference>
<dbReference type="iPTMnet" id="P49256"/>
<dbReference type="PaxDb" id="9612-ENSCAFP00000040025"/>
<dbReference type="Ensembl" id="ENSCAFT00000047011.4">
    <property type="protein sequence ID" value="ENSCAFP00000040025.3"/>
    <property type="gene ID" value="ENSCAFG00000016430.6"/>
</dbReference>
<dbReference type="Ensembl" id="ENSCAFT00030005676.1">
    <property type="protein sequence ID" value="ENSCAFP00030005052.1"/>
    <property type="gene ID" value="ENSCAFG00030003029.1"/>
</dbReference>
<dbReference type="Ensembl" id="ENSCAFT00040028322.1">
    <property type="protein sequence ID" value="ENSCAFP00040024605.1"/>
    <property type="gene ID" value="ENSCAFG00040015376.1"/>
</dbReference>
<dbReference type="Ensembl" id="ENSCAFT00845018663.1">
    <property type="protein sequence ID" value="ENSCAFP00845014570.1"/>
    <property type="gene ID" value="ENSCAFG00845010502.1"/>
</dbReference>
<dbReference type="GeneID" id="403938"/>
<dbReference type="KEGG" id="cfa:403938"/>
<dbReference type="CTD" id="10960"/>
<dbReference type="VEuPathDB" id="HostDB:ENSCAFG00845010502"/>
<dbReference type="VGNC" id="VGNC:42708">
    <property type="gene designation" value="LMAN2"/>
</dbReference>
<dbReference type="eggNOG" id="KOG3839">
    <property type="taxonomic scope" value="Eukaryota"/>
</dbReference>
<dbReference type="GeneTree" id="ENSGT00940000158355"/>
<dbReference type="HOGENOM" id="CLU_041093_0_0_1"/>
<dbReference type="InParanoid" id="P49256"/>
<dbReference type="OrthoDB" id="270293at2759"/>
<dbReference type="Reactome" id="R-CFA-204005">
    <property type="pathway name" value="COPII-mediated vesicle transport"/>
</dbReference>
<dbReference type="Reactome" id="R-CFA-5694530">
    <property type="pathway name" value="Cargo concentration in the ER"/>
</dbReference>
<dbReference type="EvolutionaryTrace" id="P49256"/>
<dbReference type="Proteomes" id="UP000002254">
    <property type="component" value="Chromosome 4"/>
</dbReference>
<dbReference type="Proteomes" id="UP000694429">
    <property type="component" value="Chromosome 4"/>
</dbReference>
<dbReference type="Proteomes" id="UP000694542">
    <property type="component" value="Chromosome 4"/>
</dbReference>
<dbReference type="Proteomes" id="UP000805418">
    <property type="component" value="Chromosome 4"/>
</dbReference>
<dbReference type="GO" id="GO:0009986">
    <property type="term" value="C:cell surface"/>
    <property type="evidence" value="ECO:0007669"/>
    <property type="project" value="Ensembl"/>
</dbReference>
<dbReference type="GO" id="GO:0030137">
    <property type="term" value="C:COPI-coated vesicle"/>
    <property type="evidence" value="ECO:0000314"/>
    <property type="project" value="UniProtKB"/>
</dbReference>
<dbReference type="GO" id="GO:0031410">
    <property type="term" value="C:cytoplasmic vesicle"/>
    <property type="evidence" value="ECO:0000314"/>
    <property type="project" value="UniProtKB"/>
</dbReference>
<dbReference type="GO" id="GO:0005793">
    <property type="term" value="C:endoplasmic reticulum-Golgi intermediate compartment"/>
    <property type="evidence" value="ECO:0007669"/>
    <property type="project" value="Ensembl"/>
</dbReference>
<dbReference type="GO" id="GO:0070382">
    <property type="term" value="C:exocytic vesicle"/>
    <property type="evidence" value="ECO:0000314"/>
    <property type="project" value="CAFA"/>
</dbReference>
<dbReference type="GO" id="GO:0005615">
    <property type="term" value="C:extracellular space"/>
    <property type="evidence" value="ECO:0007669"/>
    <property type="project" value="Ensembl"/>
</dbReference>
<dbReference type="GO" id="GO:0005794">
    <property type="term" value="C:Golgi apparatus"/>
    <property type="evidence" value="ECO:0000314"/>
    <property type="project" value="UniProtKB"/>
</dbReference>
<dbReference type="GO" id="GO:0000139">
    <property type="term" value="C:Golgi membrane"/>
    <property type="evidence" value="ECO:0007669"/>
    <property type="project" value="UniProtKB-SubCell"/>
</dbReference>
<dbReference type="GO" id="GO:0048471">
    <property type="term" value="C:perinuclear region of cytoplasm"/>
    <property type="evidence" value="ECO:0000314"/>
    <property type="project" value="UniProtKB"/>
</dbReference>
<dbReference type="GO" id="GO:0005886">
    <property type="term" value="C:plasma membrane"/>
    <property type="evidence" value="ECO:0007669"/>
    <property type="project" value="Ensembl"/>
</dbReference>
<dbReference type="GO" id="GO:0005537">
    <property type="term" value="F:D-mannose binding"/>
    <property type="evidence" value="ECO:0007669"/>
    <property type="project" value="Ensembl"/>
</dbReference>
<dbReference type="GO" id="GO:0031072">
    <property type="term" value="F:heat shock protein binding"/>
    <property type="evidence" value="ECO:0007669"/>
    <property type="project" value="Ensembl"/>
</dbReference>
<dbReference type="GO" id="GO:0046872">
    <property type="term" value="F:metal ion binding"/>
    <property type="evidence" value="ECO:0007669"/>
    <property type="project" value="UniProtKB-KW"/>
</dbReference>
<dbReference type="GO" id="GO:0050766">
    <property type="term" value="P:positive regulation of phagocytosis"/>
    <property type="evidence" value="ECO:0007669"/>
    <property type="project" value="Ensembl"/>
</dbReference>
<dbReference type="GO" id="GO:0015031">
    <property type="term" value="P:protein transport"/>
    <property type="evidence" value="ECO:0007669"/>
    <property type="project" value="UniProtKB-KW"/>
</dbReference>
<dbReference type="GO" id="GO:0006890">
    <property type="term" value="P:retrograde vesicle-mediated transport, Golgi to endoplasmic reticulum"/>
    <property type="evidence" value="ECO:0007669"/>
    <property type="project" value="Ensembl"/>
</dbReference>
<dbReference type="CDD" id="cd06901">
    <property type="entry name" value="lectin_VIP36_VIPL"/>
    <property type="match status" value="1"/>
</dbReference>
<dbReference type="FunFam" id="2.60.120.200:FF:000017">
    <property type="entry name" value="Vesicular integral-membrane protein VIP36"/>
    <property type="match status" value="1"/>
</dbReference>
<dbReference type="Gene3D" id="2.60.120.200">
    <property type="match status" value="1"/>
</dbReference>
<dbReference type="InterPro" id="IPR013320">
    <property type="entry name" value="ConA-like_dom_sf"/>
</dbReference>
<dbReference type="InterPro" id="IPR051136">
    <property type="entry name" value="Intracellular_Lectin-GPT"/>
</dbReference>
<dbReference type="InterPro" id="IPR005052">
    <property type="entry name" value="Lectin_leg"/>
</dbReference>
<dbReference type="InterPro" id="IPR035664">
    <property type="entry name" value="VIP36_lectin"/>
</dbReference>
<dbReference type="PANTHER" id="PTHR12223:SF36">
    <property type="entry name" value="VESICULAR INTEGRAL-MEMBRANE PROTEIN VIP36"/>
    <property type="match status" value="1"/>
</dbReference>
<dbReference type="PANTHER" id="PTHR12223">
    <property type="entry name" value="VESICULAR MANNOSE-BINDING LECTIN"/>
    <property type="match status" value="1"/>
</dbReference>
<dbReference type="Pfam" id="PF03388">
    <property type="entry name" value="Lectin_leg-like"/>
    <property type="match status" value="1"/>
</dbReference>
<dbReference type="SUPFAM" id="SSF49899">
    <property type="entry name" value="Concanavalin A-like lectins/glucanases"/>
    <property type="match status" value="1"/>
</dbReference>
<dbReference type="PROSITE" id="PS51328">
    <property type="entry name" value="L_LECTIN_LIKE"/>
    <property type="match status" value="1"/>
</dbReference>
<reference key="1">
    <citation type="journal article" date="1994" name="EMBO J.">
        <title>VIP36, a novel component of glycolipid rafts and exocytic carrier vesicles in epithelial cells.</title>
        <authorList>
            <person name="Fiedler K."/>
            <person name="Parton R.G."/>
            <person name="Kellner R."/>
            <person name="Etzold T."/>
            <person name="Simons K."/>
        </authorList>
    </citation>
    <scope>NUCLEOTIDE SEQUENCE [MRNA]</scope>
    <scope>PROTEIN SEQUENCE OF 45-55 AND 304-314</scope>
    <source>
        <strain>Cocker spaniel</strain>
        <tissue>Kidney</tissue>
    </source>
</reference>
<reference key="2">
    <citation type="journal article" date="1994" name="Cell">
        <title>A putative novel class of animal lectins in the secretory pathway homologous to leguminous lectins.</title>
        <authorList>
            <person name="Fiedler K."/>
            <person name="Simons K."/>
        </authorList>
    </citation>
    <scope>SIMILARITY TO LEGUMINOUS LECTINS</scope>
</reference>
<reference key="3">
    <citation type="journal article" date="1996" name="J. Cell Sci.">
        <title>Characterization of VIP36, an animal lectin homologous to leguminous lectins.</title>
        <authorList>
            <person name="Fiedler K."/>
            <person name="Simons K."/>
        </authorList>
    </citation>
    <scope>CHARACTERIZATION</scope>
    <scope>GLYCOSYLATION AT ASN-183</scope>
</reference>
<reference key="4">
    <citation type="journal article" date="2002" name="J. Biol. Chem.">
        <title>Involvement of VIP36 in intracellular transport and secretion of glycoproteins in polarized Madin-Darby canine kidney (MDCK) cells.</title>
        <authorList>
            <person name="Hara-Kuge S."/>
            <person name="Ohkura T."/>
            <person name="Ideo H."/>
            <person name="Shimada O."/>
            <person name="Atsumi S."/>
            <person name="Yamashita K."/>
        </authorList>
    </citation>
    <scope>FUNCTION</scope>
</reference>
<reference key="5">
    <citation type="journal article" date="2007" name="J. Biol. Chem.">
        <title>Structural basis for recognition of high mannose type glycoproteins by mammalian transport lectin VIP36.</title>
        <authorList>
            <person name="Satoh T."/>
            <person name="Cowieson N.P."/>
            <person name="Hakamata W."/>
            <person name="Ideo H."/>
            <person name="Fukushima K."/>
            <person name="Kurihara M."/>
            <person name="Kato R."/>
            <person name="Yamashita K."/>
            <person name="Wakatsuki S."/>
        </authorList>
    </citation>
    <scope>X-RAY CRYSTALLOGRAPHY (1.65 ANGSTROMS) OF 51-301 ALONE AND IN COMPLEX WITH HIGH MANNOSE GLYCANS AND CALCIUM IONS</scope>
    <scope>SUBUNIT</scope>
    <scope>FUNCTION</scope>
    <scope>DISULFIDE BOND</scope>
</reference>
<comment type="function">
    <text evidence="3 4">Plays a role as an intracellular lectin in the early secretory pathway. Interacts with N-acetyl-D-galactosamine and high-mannose type glycans and may also bind to O-linked glycans. Involved in the transport and sorting of glycoproteins carrying high mannose-type glycans.</text>
</comment>
<comment type="cofactor">
    <cofactor>
        <name>Ca(2+)</name>
        <dbReference type="ChEBI" id="CHEBI:29108"/>
    </cofactor>
    <text>Binds 2 calcium ions per subunit.</text>
</comment>
<comment type="subunit">
    <text evidence="4">Monomer.</text>
</comment>
<comment type="subcellular location">
    <subcellularLocation>
        <location>Golgi apparatus membrane</location>
        <topology>Single-pass type I membrane protein</topology>
    </subcellularLocation>
</comment>
<comment type="tissue specificity">
    <text>Expressed in kidney, liver, intestine, lung, spleen and heart. Low expression in brain.</text>
</comment>
<feature type="signal peptide" evidence="5">
    <location>
        <begin position="1"/>
        <end position="44"/>
    </location>
</feature>
<feature type="chain" id="PRO_0000017665" description="Vesicular integral-membrane protein VIP36">
    <location>
        <begin position="45"/>
        <end position="356"/>
    </location>
</feature>
<feature type="topological domain" description="Lumenal" evidence="1">
    <location>
        <begin position="45"/>
        <end position="322"/>
    </location>
</feature>
<feature type="transmembrane region" description="Helical" evidence="1">
    <location>
        <begin position="323"/>
        <end position="345"/>
    </location>
</feature>
<feature type="topological domain" description="Cytoplasmic" evidence="1">
    <location>
        <begin position="346"/>
        <end position="356"/>
    </location>
</feature>
<feature type="domain" description="L-type lectin-like" evidence="2">
    <location>
        <begin position="52"/>
        <end position="276"/>
    </location>
</feature>
<feature type="binding site">
    <location>
        <position position="96"/>
    </location>
    <ligand>
        <name>a carbohydrate</name>
        <dbReference type="ChEBI" id="CHEBI:16646"/>
    </ligand>
</feature>
<feature type="binding site">
    <location>
        <position position="131"/>
    </location>
    <ligand>
        <name>a carbohydrate</name>
        <dbReference type="ChEBI" id="CHEBI:16646"/>
    </ligand>
</feature>
<feature type="binding site">
    <location>
        <position position="162"/>
    </location>
    <ligand>
        <name>Ca(2+)</name>
        <dbReference type="ChEBI" id="CHEBI:29108"/>
    </ligand>
</feature>
<feature type="binding site">
    <location>
        <begin position="164"/>
        <end position="166"/>
    </location>
    <ligand>
        <name>a carbohydrate</name>
        <dbReference type="ChEBI" id="CHEBI:16646"/>
    </ligand>
</feature>
<feature type="binding site">
    <location>
        <position position="164"/>
    </location>
    <ligand>
        <name>Ca(2+)</name>
        <dbReference type="ChEBI" id="CHEBI:29108"/>
    </ligand>
</feature>
<feature type="binding site">
    <location>
        <position position="166"/>
    </location>
    <ligand>
        <name>Ca(2+)</name>
        <dbReference type="ChEBI" id="CHEBI:29108"/>
    </ligand>
</feature>
<feature type="binding site">
    <location>
        <position position="190"/>
    </location>
    <ligand>
        <name>a carbohydrate</name>
        <dbReference type="ChEBI" id="CHEBI:16646"/>
    </ligand>
</feature>
<feature type="binding site">
    <location>
        <position position="193"/>
    </location>
    <ligand>
        <name>Ca(2+)</name>
        <dbReference type="ChEBI" id="CHEBI:29108"/>
    </ligand>
</feature>
<feature type="binding site">
    <location>
        <begin position="260"/>
        <end position="262"/>
    </location>
    <ligand>
        <name>a carbohydrate</name>
        <dbReference type="ChEBI" id="CHEBI:16646"/>
    </ligand>
</feature>
<feature type="glycosylation site" description="N-linked (GlcNAc...) asparagine" evidence="6">
    <location>
        <position position="183"/>
    </location>
</feature>
<feature type="disulfide bond" evidence="2 4">
    <location>
        <begin position="202"/>
        <end position="239"/>
    </location>
</feature>
<feature type="helix" evidence="7">
    <location>
        <begin position="56"/>
        <end position="58"/>
    </location>
</feature>
<feature type="turn" evidence="7">
    <location>
        <begin position="65"/>
        <end position="67"/>
    </location>
</feature>
<feature type="strand" evidence="7">
    <location>
        <begin position="68"/>
        <end position="71"/>
    </location>
</feature>
<feature type="strand" evidence="7">
    <location>
        <begin position="74"/>
        <end position="79"/>
    </location>
</feature>
<feature type="strand" evidence="7">
    <location>
        <begin position="88"/>
        <end position="91"/>
    </location>
</feature>
<feature type="strand" evidence="7">
    <location>
        <begin position="93"/>
        <end position="105"/>
    </location>
</feature>
<feature type="strand" evidence="7">
    <location>
        <begin position="110"/>
        <end position="121"/>
    </location>
</feature>
<feature type="strand" evidence="7">
    <location>
        <begin position="132"/>
        <end position="139"/>
    </location>
</feature>
<feature type="strand" evidence="7">
    <location>
        <begin position="144"/>
        <end position="150"/>
    </location>
</feature>
<feature type="strand" evidence="7">
    <location>
        <begin position="155"/>
        <end position="162"/>
    </location>
</feature>
<feature type="strand" evidence="8">
    <location>
        <begin position="167"/>
        <end position="169"/>
    </location>
</feature>
<feature type="strand" evidence="7">
    <location>
        <begin position="174"/>
        <end position="184"/>
    </location>
</feature>
<feature type="helix" evidence="7">
    <location>
        <begin position="190"/>
        <end position="192"/>
    </location>
</feature>
<feature type="helix" evidence="7">
    <location>
        <begin position="195"/>
        <end position="197"/>
    </location>
</feature>
<feature type="strand" evidence="7">
    <location>
        <begin position="200"/>
        <end position="203"/>
    </location>
</feature>
<feature type="strand" evidence="7">
    <location>
        <begin position="213"/>
        <end position="220"/>
    </location>
</feature>
<feature type="strand" evidence="7">
    <location>
        <begin position="223"/>
        <end position="229"/>
    </location>
</feature>
<feature type="strand" evidence="7">
    <location>
        <begin position="231"/>
        <end position="234"/>
    </location>
</feature>
<feature type="strand" evidence="7">
    <location>
        <begin position="237"/>
        <end position="242"/>
    </location>
</feature>
<feature type="strand" evidence="7">
    <location>
        <begin position="249"/>
        <end position="262"/>
    </location>
</feature>
<feature type="strand" evidence="7">
    <location>
        <begin position="265"/>
        <end position="275"/>
    </location>
</feature>
<feature type="helix" evidence="7">
    <location>
        <begin position="282"/>
        <end position="286"/>
    </location>
</feature>
<feature type="helix" evidence="7">
    <location>
        <begin position="289"/>
        <end position="291"/>
    </location>
</feature>
<gene>
    <name type="primary">LMAN2</name>
</gene>
<accession>P49256</accession>
<evidence type="ECO:0000255" key="1"/>
<evidence type="ECO:0000255" key="2">
    <source>
        <dbReference type="PROSITE-ProRule" id="PRU00658"/>
    </source>
</evidence>
<evidence type="ECO:0000269" key="3">
    <source>
    </source>
</evidence>
<evidence type="ECO:0000269" key="4">
    <source>
    </source>
</evidence>
<evidence type="ECO:0000269" key="5">
    <source>
    </source>
</evidence>
<evidence type="ECO:0000269" key="6">
    <source>
    </source>
</evidence>
<evidence type="ECO:0007829" key="7">
    <source>
        <dbReference type="PDB" id="2DUR"/>
    </source>
</evidence>
<evidence type="ECO:0007829" key="8">
    <source>
        <dbReference type="PDB" id="2E6V"/>
    </source>
</evidence>